<evidence type="ECO:0000255" key="1">
    <source>
        <dbReference type="HAMAP-Rule" id="MF_01582"/>
    </source>
</evidence>
<feature type="chain" id="PRO_1000087938" description="Serine/threonine transporter SstT">
    <location>
        <begin position="1"/>
        <end position="414"/>
    </location>
</feature>
<feature type="transmembrane region" description="Helical" evidence="1">
    <location>
        <begin position="16"/>
        <end position="36"/>
    </location>
</feature>
<feature type="transmembrane region" description="Helical" evidence="1">
    <location>
        <begin position="46"/>
        <end position="66"/>
    </location>
</feature>
<feature type="transmembrane region" description="Helical" evidence="1">
    <location>
        <begin position="84"/>
        <end position="104"/>
    </location>
</feature>
<feature type="transmembrane region" description="Helical" evidence="1">
    <location>
        <begin position="143"/>
        <end position="163"/>
    </location>
</feature>
<feature type="transmembrane region" description="Helical" evidence="1">
    <location>
        <begin position="180"/>
        <end position="200"/>
    </location>
</feature>
<feature type="transmembrane region" description="Helical" evidence="1">
    <location>
        <begin position="219"/>
        <end position="239"/>
    </location>
</feature>
<feature type="transmembrane region" description="Helical" evidence="1">
    <location>
        <begin position="300"/>
        <end position="320"/>
    </location>
</feature>
<feature type="transmembrane region" description="Helical" evidence="1">
    <location>
        <begin position="332"/>
        <end position="352"/>
    </location>
</feature>
<accession>A9N608</accession>
<comment type="function">
    <text evidence="1">Involved in the import of serine and threonine into the cell, with the concomitant import of sodium (symport system).</text>
</comment>
<comment type="catalytic activity">
    <reaction evidence="1">
        <text>L-serine(in) + Na(+)(in) = L-serine(out) + Na(+)(out)</text>
        <dbReference type="Rhea" id="RHEA:29575"/>
        <dbReference type="ChEBI" id="CHEBI:29101"/>
        <dbReference type="ChEBI" id="CHEBI:33384"/>
    </reaction>
    <physiologicalReaction direction="right-to-left" evidence="1">
        <dbReference type="Rhea" id="RHEA:29577"/>
    </physiologicalReaction>
</comment>
<comment type="catalytic activity">
    <reaction evidence="1">
        <text>L-threonine(in) + Na(+)(in) = L-threonine(out) + Na(+)(out)</text>
        <dbReference type="Rhea" id="RHEA:69999"/>
        <dbReference type="ChEBI" id="CHEBI:29101"/>
        <dbReference type="ChEBI" id="CHEBI:57926"/>
    </reaction>
    <physiologicalReaction direction="right-to-left" evidence="1">
        <dbReference type="Rhea" id="RHEA:70001"/>
    </physiologicalReaction>
</comment>
<comment type="subcellular location">
    <subcellularLocation>
        <location evidence="1">Cell inner membrane</location>
        <topology evidence="1">Multi-pass membrane protein</topology>
    </subcellularLocation>
</comment>
<comment type="similarity">
    <text evidence="1">Belongs to the dicarboxylate/amino acid:cation symporter (DAACS) (TC 2.A.23) family.</text>
</comment>
<proteinExistence type="inferred from homology"/>
<reference key="1">
    <citation type="submission" date="2007-11" db="EMBL/GenBank/DDBJ databases">
        <authorList>
            <consortium name="The Salmonella enterica serovar Paratyphi B Genome Sequencing Project"/>
            <person name="McClelland M."/>
            <person name="Sanderson E.K."/>
            <person name="Porwollik S."/>
            <person name="Spieth J."/>
            <person name="Clifton W.S."/>
            <person name="Fulton R."/>
            <person name="Cordes M."/>
            <person name="Wollam A."/>
            <person name="Shah N."/>
            <person name="Pepin K."/>
            <person name="Bhonagiri V."/>
            <person name="Nash W."/>
            <person name="Johnson M."/>
            <person name="Thiruvilangam P."/>
            <person name="Wilson R."/>
        </authorList>
    </citation>
    <scope>NUCLEOTIDE SEQUENCE [LARGE SCALE GENOMIC DNA]</scope>
    <source>
        <strain>ATCC BAA-1250 / SPB7</strain>
    </source>
</reference>
<name>SSTT_SALPB</name>
<keyword id="KW-0029">Amino-acid transport</keyword>
<keyword id="KW-0997">Cell inner membrane</keyword>
<keyword id="KW-1003">Cell membrane</keyword>
<keyword id="KW-0472">Membrane</keyword>
<keyword id="KW-0769">Symport</keyword>
<keyword id="KW-0812">Transmembrane</keyword>
<keyword id="KW-1133">Transmembrane helix</keyword>
<keyword id="KW-0813">Transport</keyword>
<organism>
    <name type="scientific">Salmonella paratyphi B (strain ATCC BAA-1250 / SPB7)</name>
    <dbReference type="NCBI Taxonomy" id="1016998"/>
    <lineage>
        <taxon>Bacteria</taxon>
        <taxon>Pseudomonadati</taxon>
        <taxon>Pseudomonadota</taxon>
        <taxon>Gammaproteobacteria</taxon>
        <taxon>Enterobacterales</taxon>
        <taxon>Enterobacteriaceae</taxon>
        <taxon>Salmonella</taxon>
    </lineage>
</organism>
<dbReference type="EMBL" id="CP000886">
    <property type="protein sequence ID" value="ABX69354.1"/>
    <property type="molecule type" value="Genomic_DNA"/>
</dbReference>
<dbReference type="RefSeq" id="WP_000235363.1">
    <property type="nucleotide sequence ID" value="NC_010102.1"/>
</dbReference>
<dbReference type="SMR" id="A9N608"/>
<dbReference type="KEGG" id="spq:SPAB_04026"/>
<dbReference type="PATRIC" id="fig|1016998.12.peg.3794"/>
<dbReference type="HOGENOM" id="CLU_044581_0_0_6"/>
<dbReference type="BioCyc" id="SENT1016998:SPAB_RS16345-MONOMER"/>
<dbReference type="Proteomes" id="UP000008556">
    <property type="component" value="Chromosome"/>
</dbReference>
<dbReference type="GO" id="GO:0005886">
    <property type="term" value="C:plasma membrane"/>
    <property type="evidence" value="ECO:0007669"/>
    <property type="project" value="UniProtKB-SubCell"/>
</dbReference>
<dbReference type="GO" id="GO:0005295">
    <property type="term" value="F:neutral L-amino acid:sodium symporter activity"/>
    <property type="evidence" value="ECO:0007669"/>
    <property type="project" value="TreeGrafter"/>
</dbReference>
<dbReference type="GO" id="GO:0032329">
    <property type="term" value="P:serine transport"/>
    <property type="evidence" value="ECO:0007669"/>
    <property type="project" value="InterPro"/>
</dbReference>
<dbReference type="GO" id="GO:0015826">
    <property type="term" value="P:threonine transport"/>
    <property type="evidence" value="ECO:0007669"/>
    <property type="project" value="InterPro"/>
</dbReference>
<dbReference type="FunFam" id="1.10.3860.10:FF:000003">
    <property type="entry name" value="Serine/threonine transporter sstT"/>
    <property type="match status" value="1"/>
</dbReference>
<dbReference type="Gene3D" id="1.10.3860.10">
    <property type="entry name" value="Sodium:dicarboxylate symporter"/>
    <property type="match status" value="1"/>
</dbReference>
<dbReference type="HAMAP" id="MF_01582">
    <property type="entry name" value="Ser_Thr_transp_SstT"/>
    <property type="match status" value="1"/>
</dbReference>
<dbReference type="InterPro" id="IPR001991">
    <property type="entry name" value="Na-dicarboxylate_symporter"/>
</dbReference>
<dbReference type="InterPro" id="IPR036458">
    <property type="entry name" value="Na:dicarbo_symporter_sf"/>
</dbReference>
<dbReference type="InterPro" id="IPR023025">
    <property type="entry name" value="Ser_Thr_transp_SstT"/>
</dbReference>
<dbReference type="NCBIfam" id="NF010151">
    <property type="entry name" value="PRK13628.1"/>
    <property type="match status" value="1"/>
</dbReference>
<dbReference type="PANTHER" id="PTHR42865">
    <property type="entry name" value="PROTON/GLUTAMATE-ASPARTATE SYMPORTER"/>
    <property type="match status" value="1"/>
</dbReference>
<dbReference type="PANTHER" id="PTHR42865:SF8">
    <property type="entry name" value="SERINE_THREONINE TRANSPORTER SSTT"/>
    <property type="match status" value="1"/>
</dbReference>
<dbReference type="Pfam" id="PF00375">
    <property type="entry name" value="SDF"/>
    <property type="match status" value="1"/>
</dbReference>
<dbReference type="PRINTS" id="PR00173">
    <property type="entry name" value="EDTRNSPORT"/>
</dbReference>
<dbReference type="SUPFAM" id="SSF118215">
    <property type="entry name" value="Proton glutamate symport protein"/>
    <property type="match status" value="1"/>
</dbReference>
<dbReference type="PROSITE" id="PS00713">
    <property type="entry name" value="NA_DICARBOXYL_SYMP_1"/>
    <property type="match status" value="1"/>
</dbReference>
<gene>
    <name evidence="1" type="primary">sstT</name>
    <name type="ordered locus">SPAB_04026</name>
</gene>
<protein>
    <recommendedName>
        <fullName evidence="1">Serine/threonine transporter SstT</fullName>
    </recommendedName>
    <alternativeName>
        <fullName evidence="1">Na(+)/serine-threonine symporter</fullName>
    </alternativeName>
</protein>
<sequence length="414" mass="43413">MATQRASGLLQRLAQGSLVKQILVGLVLGILLAWISKPAAEAVGLLGTLFVGALKAVAPVLVLMLVMASIANHQHGQKTNIRPILFLYLLGTFSAALAAVVFSFAFPSTLHLSSSAQDIVPPSGIVEVLRGLLMSMVSNPIDALLNANYIGILVWAVGLGFALRHGNETTKNLVNDMSNAVTFMVKLVIRFAPVGIFGLVSSTLATTGFSTLWGYAHLLVVLIGCMLLVALVVNPLLVFWKIRRNPYPLVFACLRESGVYAFFTRSSAANIPVNMALCEKLNLDRDTYSVSIPLGATINMAGAAITITVLTLAAVHTLGVPVDLPTALLLSVVASLCACGASGVAGGSLLLIPLACNMFGIPNDIAMQVVAVGFIIGVLQDSCETALNSSTDVLFTAAACQAEDERLANNALRS</sequence>